<proteinExistence type="evidence at protein level"/>
<reference key="1">
    <citation type="journal article" date="2002" name="Nature">
        <title>The genome sequence of Schizosaccharomyces pombe.</title>
        <authorList>
            <person name="Wood V."/>
            <person name="Gwilliam R."/>
            <person name="Rajandream M.A."/>
            <person name="Lyne M.H."/>
            <person name="Lyne R."/>
            <person name="Stewart A."/>
            <person name="Sgouros J.G."/>
            <person name="Peat N."/>
            <person name="Hayles J."/>
            <person name="Baker S.G."/>
            <person name="Basham D."/>
            <person name="Bowman S."/>
            <person name="Brooks K."/>
            <person name="Brown D."/>
            <person name="Brown S."/>
            <person name="Chillingworth T."/>
            <person name="Churcher C.M."/>
            <person name="Collins M."/>
            <person name="Connor R."/>
            <person name="Cronin A."/>
            <person name="Davis P."/>
            <person name="Feltwell T."/>
            <person name="Fraser A."/>
            <person name="Gentles S."/>
            <person name="Goble A."/>
            <person name="Hamlin N."/>
            <person name="Harris D.E."/>
            <person name="Hidalgo J."/>
            <person name="Hodgson G."/>
            <person name="Holroyd S."/>
            <person name="Hornsby T."/>
            <person name="Howarth S."/>
            <person name="Huckle E.J."/>
            <person name="Hunt S."/>
            <person name="Jagels K."/>
            <person name="James K.D."/>
            <person name="Jones L."/>
            <person name="Jones M."/>
            <person name="Leather S."/>
            <person name="McDonald S."/>
            <person name="McLean J."/>
            <person name="Mooney P."/>
            <person name="Moule S."/>
            <person name="Mungall K.L."/>
            <person name="Murphy L.D."/>
            <person name="Niblett D."/>
            <person name="Odell C."/>
            <person name="Oliver K."/>
            <person name="O'Neil S."/>
            <person name="Pearson D."/>
            <person name="Quail M.A."/>
            <person name="Rabbinowitsch E."/>
            <person name="Rutherford K.M."/>
            <person name="Rutter S."/>
            <person name="Saunders D."/>
            <person name="Seeger K."/>
            <person name="Sharp S."/>
            <person name="Skelton J."/>
            <person name="Simmonds M.N."/>
            <person name="Squares R."/>
            <person name="Squares S."/>
            <person name="Stevens K."/>
            <person name="Taylor K."/>
            <person name="Taylor R.G."/>
            <person name="Tivey A."/>
            <person name="Walsh S.V."/>
            <person name="Warren T."/>
            <person name="Whitehead S."/>
            <person name="Woodward J.R."/>
            <person name="Volckaert G."/>
            <person name="Aert R."/>
            <person name="Robben J."/>
            <person name="Grymonprez B."/>
            <person name="Weltjens I."/>
            <person name="Vanstreels E."/>
            <person name="Rieger M."/>
            <person name="Schaefer M."/>
            <person name="Mueller-Auer S."/>
            <person name="Gabel C."/>
            <person name="Fuchs M."/>
            <person name="Duesterhoeft A."/>
            <person name="Fritzc C."/>
            <person name="Holzer E."/>
            <person name="Moestl D."/>
            <person name="Hilbert H."/>
            <person name="Borzym K."/>
            <person name="Langer I."/>
            <person name="Beck A."/>
            <person name="Lehrach H."/>
            <person name="Reinhardt R."/>
            <person name="Pohl T.M."/>
            <person name="Eger P."/>
            <person name="Zimmermann W."/>
            <person name="Wedler H."/>
            <person name="Wambutt R."/>
            <person name="Purnelle B."/>
            <person name="Goffeau A."/>
            <person name="Cadieu E."/>
            <person name="Dreano S."/>
            <person name="Gloux S."/>
            <person name="Lelaure V."/>
            <person name="Mottier S."/>
            <person name="Galibert F."/>
            <person name="Aves S.J."/>
            <person name="Xiang Z."/>
            <person name="Hunt C."/>
            <person name="Moore K."/>
            <person name="Hurst S.M."/>
            <person name="Lucas M."/>
            <person name="Rochet M."/>
            <person name="Gaillardin C."/>
            <person name="Tallada V.A."/>
            <person name="Garzon A."/>
            <person name="Thode G."/>
            <person name="Daga R.R."/>
            <person name="Cruzado L."/>
            <person name="Jimenez J."/>
            <person name="Sanchez M."/>
            <person name="del Rey F."/>
            <person name="Benito J."/>
            <person name="Dominguez A."/>
            <person name="Revuelta J.L."/>
            <person name="Moreno S."/>
            <person name="Armstrong J."/>
            <person name="Forsburg S.L."/>
            <person name="Cerutti L."/>
            <person name="Lowe T."/>
            <person name="McCombie W.R."/>
            <person name="Paulsen I."/>
            <person name="Potashkin J."/>
            <person name="Shpakovski G.V."/>
            <person name="Ussery D."/>
            <person name="Barrell B.G."/>
            <person name="Nurse P."/>
        </authorList>
    </citation>
    <scope>NUCLEOTIDE SEQUENCE [LARGE SCALE GENOMIC DNA]</scope>
    <source>
        <strain>972 / ATCC 24843</strain>
    </source>
</reference>
<reference key="2">
    <citation type="journal article" date="2006" name="Nat. Biotechnol.">
        <title>ORFeome cloning and global analysis of protein localization in the fission yeast Schizosaccharomyces pombe.</title>
        <authorList>
            <person name="Matsuyama A."/>
            <person name="Arai R."/>
            <person name="Yashiroda Y."/>
            <person name="Shirai A."/>
            <person name="Kamata A."/>
            <person name="Sekido S."/>
            <person name="Kobayashi Y."/>
            <person name="Hashimoto A."/>
            <person name="Hamamoto M."/>
            <person name="Hiraoka Y."/>
            <person name="Horinouchi S."/>
            <person name="Yoshida M."/>
        </authorList>
    </citation>
    <scope>SUBCELLULAR LOCATION [LARGE SCALE ANALYSIS]</scope>
</reference>
<reference key="3">
    <citation type="journal article" date="2008" name="J. Proteome Res.">
        <title>Phosphoproteome analysis of fission yeast.</title>
        <authorList>
            <person name="Wilson-Grady J.T."/>
            <person name="Villen J."/>
            <person name="Gygi S.P."/>
        </authorList>
    </citation>
    <scope>PHOSPHORYLATION [LARGE SCALE ANALYSIS] AT SER-117; THR-121; SER-125 AND SER-506</scope>
    <scope>IDENTIFICATION BY MASS SPECTROMETRY</scope>
</reference>
<name>ESF1_SCHPO</name>
<evidence type="ECO:0000250" key="1"/>
<evidence type="ECO:0000255" key="2"/>
<evidence type="ECO:0000256" key="3">
    <source>
        <dbReference type="SAM" id="MobiDB-lite"/>
    </source>
</evidence>
<evidence type="ECO:0000269" key="4">
    <source>
    </source>
</evidence>
<evidence type="ECO:0000269" key="5">
    <source>
    </source>
</evidence>
<evidence type="ECO:0000305" key="6"/>
<keyword id="KW-0175">Coiled coil</keyword>
<keyword id="KW-0539">Nucleus</keyword>
<keyword id="KW-0597">Phosphoprotein</keyword>
<keyword id="KW-1185">Reference proteome</keyword>
<keyword id="KW-0690">Ribosome biogenesis</keyword>
<keyword id="KW-0694">RNA-binding</keyword>
<keyword id="KW-0698">rRNA processing</keyword>
<gene>
    <name type="primary">esf1</name>
    <name type="ORF">SPBC1734.01c</name>
    <name type="ORF">SPBC337.17c</name>
</gene>
<dbReference type="EMBL" id="CU329671">
    <property type="protein sequence ID" value="CAA21287.1"/>
    <property type="molecule type" value="Genomic_DNA"/>
</dbReference>
<dbReference type="PIR" id="T40270">
    <property type="entry name" value="T40270"/>
</dbReference>
<dbReference type="RefSeq" id="NP_595418.1">
    <property type="nucleotide sequence ID" value="NM_001021325.2"/>
</dbReference>
<dbReference type="BioGRID" id="276614">
    <property type="interactions" value="3"/>
</dbReference>
<dbReference type="FunCoup" id="O74828">
    <property type="interactions" value="704"/>
</dbReference>
<dbReference type="STRING" id="284812.O74828"/>
<dbReference type="iPTMnet" id="O74828"/>
<dbReference type="PaxDb" id="4896-SPBC1734.01c.1"/>
<dbReference type="EnsemblFungi" id="SPBC1734.01c.1">
    <property type="protein sequence ID" value="SPBC1734.01c.1:pep"/>
    <property type="gene ID" value="SPBC1734.01c"/>
</dbReference>
<dbReference type="GeneID" id="2540076"/>
<dbReference type="KEGG" id="spo:2540076"/>
<dbReference type="PomBase" id="SPBC1734.01c">
    <property type="gene designation" value="esf1"/>
</dbReference>
<dbReference type="VEuPathDB" id="FungiDB:SPBC1734.01c"/>
<dbReference type="eggNOG" id="KOG2318">
    <property type="taxonomic scope" value="Eukaryota"/>
</dbReference>
<dbReference type="HOGENOM" id="CLU_010564_0_1_1"/>
<dbReference type="InParanoid" id="O74828"/>
<dbReference type="OMA" id="DHDFAID"/>
<dbReference type="PhylomeDB" id="O74828"/>
<dbReference type="PRO" id="PR:O74828"/>
<dbReference type="Proteomes" id="UP000002485">
    <property type="component" value="Chromosome II"/>
</dbReference>
<dbReference type="GO" id="GO:0005730">
    <property type="term" value="C:nucleolus"/>
    <property type="evidence" value="ECO:0007005"/>
    <property type="project" value="PomBase"/>
</dbReference>
<dbReference type="GO" id="GO:0005634">
    <property type="term" value="C:nucleus"/>
    <property type="evidence" value="ECO:0007005"/>
    <property type="project" value="PomBase"/>
</dbReference>
<dbReference type="GO" id="GO:0003723">
    <property type="term" value="F:RNA binding"/>
    <property type="evidence" value="ECO:0000318"/>
    <property type="project" value="GO_Central"/>
</dbReference>
<dbReference type="GO" id="GO:0006364">
    <property type="term" value="P:rRNA processing"/>
    <property type="evidence" value="ECO:0000318"/>
    <property type="project" value="GO_Central"/>
</dbReference>
<dbReference type="InterPro" id="IPR039754">
    <property type="entry name" value="Esf1"/>
</dbReference>
<dbReference type="InterPro" id="IPR012580">
    <property type="entry name" value="NUC153"/>
</dbReference>
<dbReference type="InterPro" id="IPR056750">
    <property type="entry name" value="RRM_ESF1"/>
</dbReference>
<dbReference type="PANTHER" id="PTHR12202">
    <property type="entry name" value="ESF1 HOMOLOG"/>
    <property type="match status" value="1"/>
</dbReference>
<dbReference type="PANTHER" id="PTHR12202:SF0">
    <property type="entry name" value="ESF1 HOMOLOG"/>
    <property type="match status" value="1"/>
</dbReference>
<dbReference type="Pfam" id="PF08159">
    <property type="entry name" value="NUC153"/>
    <property type="match status" value="1"/>
</dbReference>
<dbReference type="Pfam" id="PF25121">
    <property type="entry name" value="RRM_ESF1"/>
    <property type="match status" value="1"/>
</dbReference>
<organism>
    <name type="scientific">Schizosaccharomyces pombe (strain 972 / ATCC 24843)</name>
    <name type="common">Fission yeast</name>
    <dbReference type="NCBI Taxonomy" id="284812"/>
    <lineage>
        <taxon>Eukaryota</taxon>
        <taxon>Fungi</taxon>
        <taxon>Dikarya</taxon>
        <taxon>Ascomycota</taxon>
        <taxon>Taphrinomycotina</taxon>
        <taxon>Schizosaccharomycetes</taxon>
        <taxon>Schizosaccharomycetales</taxon>
        <taxon>Schizosaccharomycetaceae</taxon>
        <taxon>Schizosaccharomyces</taxon>
    </lineage>
</organism>
<comment type="function">
    <text evidence="1">Involved in the 18S rRNA synthesis. Required for the early cleavages at sites A0, A1 and A2 (By similarity).</text>
</comment>
<comment type="subcellular location">
    <subcellularLocation>
        <location evidence="4">Nucleus</location>
        <location evidence="4">Nucleolus</location>
    </subcellularLocation>
</comment>
<comment type="similarity">
    <text evidence="6">Belongs to the ESF1 family.</text>
</comment>
<protein>
    <recommendedName>
        <fullName>Pre-rRNA-processing protein esf1</fullName>
    </recommendedName>
</protein>
<sequence length="682" mass="77754">MGKKQTKPINAKSRSESNVVADPRFQSVHSDPRFSRLKRGNFKVKVDERFKSLKEDKDFKTTASVDRYGRPLNQDKATKEIDRLYELENEGSSSSSESSEITDNEEVASASSKSTKSEELTDEESEDEEVYDPARGEGIISTSESSDESDAESETEAQPEISELAGIEPEENIPRGSETNRLAVVNMDWDNLQAVDLFVALSSFCPPGGKLLKVSIYPSEFGKSRMAAEHVQGPPRDIFTPADNQPSSAELHEAQKFGFDNNESDQDEEDALIEEDLGNEFDMVKLRQYQLERLRYYYAVVECDSVRTAKVIYETCDGAEYETSANIYDLRFIPDDVTFDDDESREVCTKAPEKYEPRDFVTDALQHSKVKLSWDAEDPHRKDLIKKAFTSQDIEDLDFSAYIASSESEDEDVDVIRSRYQKLLSGDADDFQANSNPFEDDDKLEGANGEMEVTFTSGFDVDNNANSSEKDETTIEKYKRKAAERKQRRKELRQLKKTKDDEGEGSDVDLGFDDPFFKDKDASRNNKKNKKGKHTQIEDPTAASKEELENLVREDENDSEQLDHFDMKSILKAEKFKKNRKLKKKASNLEGLQEGFEADVSDPRFAALYTNHNFALDPTNPHFKRTKTVEKIMDESRKRRSNQLEQTQDGKPELKIKKRKAEKGDQRQELDRIVKSIKRSGK</sequence>
<feature type="chain" id="PRO_0000352844" description="Pre-rRNA-processing protein esf1">
    <location>
        <begin position="1"/>
        <end position="682"/>
    </location>
</feature>
<feature type="region of interest" description="Disordered" evidence="3">
    <location>
        <begin position="1"/>
        <end position="32"/>
    </location>
</feature>
<feature type="region of interest" description="Disordered" evidence="3">
    <location>
        <begin position="55"/>
        <end position="176"/>
    </location>
</feature>
<feature type="region of interest" description="Disordered" evidence="3">
    <location>
        <begin position="457"/>
        <end position="564"/>
    </location>
</feature>
<feature type="region of interest" description="Disordered" evidence="3">
    <location>
        <begin position="634"/>
        <end position="682"/>
    </location>
</feature>
<feature type="coiled-coil region" evidence="2">
    <location>
        <begin position="471"/>
        <end position="597"/>
    </location>
</feature>
<feature type="compositionally biased region" description="Basic and acidic residues" evidence="3">
    <location>
        <begin position="76"/>
        <end position="86"/>
    </location>
</feature>
<feature type="compositionally biased region" description="Low complexity" evidence="3">
    <location>
        <begin position="90"/>
        <end position="99"/>
    </location>
</feature>
<feature type="compositionally biased region" description="Acidic residues" evidence="3">
    <location>
        <begin position="120"/>
        <end position="131"/>
    </location>
</feature>
<feature type="compositionally biased region" description="Acidic residues" evidence="3">
    <location>
        <begin position="145"/>
        <end position="157"/>
    </location>
</feature>
<feature type="compositionally biased region" description="Basic and acidic residues" evidence="3">
    <location>
        <begin position="468"/>
        <end position="477"/>
    </location>
</feature>
<feature type="compositionally biased region" description="Basic residues" evidence="3">
    <location>
        <begin position="478"/>
        <end position="491"/>
    </location>
</feature>
<feature type="compositionally biased region" description="Acidic residues" evidence="3">
    <location>
        <begin position="501"/>
        <end position="512"/>
    </location>
</feature>
<feature type="compositionally biased region" description="Basic and acidic residues" evidence="3">
    <location>
        <begin position="515"/>
        <end position="524"/>
    </location>
</feature>
<feature type="compositionally biased region" description="Basic residues" evidence="3">
    <location>
        <begin position="525"/>
        <end position="534"/>
    </location>
</feature>
<feature type="compositionally biased region" description="Basic and acidic residues" evidence="3">
    <location>
        <begin position="544"/>
        <end position="554"/>
    </location>
</feature>
<feature type="compositionally biased region" description="Basic and acidic residues" evidence="3">
    <location>
        <begin position="662"/>
        <end position="674"/>
    </location>
</feature>
<feature type="modified residue" description="Phosphoserine" evidence="5">
    <location>
        <position position="117"/>
    </location>
</feature>
<feature type="modified residue" description="Phosphothreonine" evidence="5">
    <location>
        <position position="121"/>
    </location>
</feature>
<feature type="modified residue" description="Phosphoserine" evidence="5">
    <location>
        <position position="125"/>
    </location>
</feature>
<feature type="modified residue" description="Phosphoserine" evidence="5">
    <location>
        <position position="506"/>
    </location>
</feature>
<accession>O74828</accession>